<feature type="initiator methionine" description="Removed" evidence="2 3 5">
    <location>
        <position position="1"/>
    </location>
</feature>
<feature type="chain" id="PRO_0000062621" description="Ribulose bisphosphate carboxylase large chain 1">
    <location>
        <begin position="2"/>
        <end position="472"/>
    </location>
</feature>
<feature type="active site" description="Proton acceptor" evidence="1">
    <location>
        <position position="167"/>
    </location>
</feature>
<feature type="active site" description="Proton acceptor" evidence="1">
    <location>
        <position position="286"/>
    </location>
</feature>
<feature type="binding site" description="in homodimeric partner" evidence="1">
    <location>
        <position position="115"/>
    </location>
    <ligand>
        <name>substrate</name>
    </ligand>
</feature>
<feature type="binding site" evidence="1">
    <location>
        <position position="165"/>
    </location>
    <ligand>
        <name>substrate</name>
    </ligand>
</feature>
<feature type="binding site" evidence="1">
    <location>
        <position position="169"/>
    </location>
    <ligand>
        <name>substrate</name>
    </ligand>
</feature>
<feature type="binding site" description="via carbamate group" evidence="1">
    <location>
        <position position="193"/>
    </location>
    <ligand>
        <name>Mg(2+)</name>
        <dbReference type="ChEBI" id="CHEBI:18420"/>
    </ligand>
</feature>
<feature type="binding site" evidence="1">
    <location>
        <position position="195"/>
    </location>
    <ligand>
        <name>Mg(2+)</name>
        <dbReference type="ChEBI" id="CHEBI:18420"/>
    </ligand>
</feature>
<feature type="binding site" evidence="1">
    <location>
        <position position="196"/>
    </location>
    <ligand>
        <name>Mg(2+)</name>
        <dbReference type="ChEBI" id="CHEBI:18420"/>
    </ligand>
</feature>
<feature type="binding site" evidence="1">
    <location>
        <position position="287"/>
    </location>
    <ligand>
        <name>substrate</name>
    </ligand>
</feature>
<feature type="binding site" evidence="1">
    <location>
        <position position="319"/>
    </location>
    <ligand>
        <name>substrate</name>
    </ligand>
</feature>
<feature type="binding site" evidence="1">
    <location>
        <position position="371"/>
    </location>
    <ligand>
        <name>substrate</name>
    </ligand>
</feature>
<feature type="site" description="Transition state stabilizer" evidence="1">
    <location>
        <position position="326"/>
    </location>
</feature>
<feature type="modified residue" description="N6-carboxylysine" evidence="1">
    <location>
        <position position="193"/>
    </location>
</feature>
<feature type="sequence conflict" description="In Ref. 4; AA sequence." evidence="5" ref="4">
    <original>A</original>
    <variation>S</variation>
    <location>
        <position position="2"/>
    </location>
</feature>
<feature type="sequence conflict" description="In Ref. 4; AA sequence." evidence="5" ref="4">
    <original>W</original>
    <variation>Y</variation>
    <location>
        <position position="17"/>
    </location>
</feature>
<feature type="sequence conflict" description="In Ref. 1; AAA23328." ref="1">
    <original>G</original>
    <variation>A</variation>
    <location>
        <position position="146"/>
    </location>
</feature>
<sequence>MAKTYSAGVKEYRETYWMPNYTPKDTDILACFKITPQAGVPREEAAAAVAAESSTGTWTTVWTDLLTDLDYYKGRAYAIEDVPGDDTCFYAFIAYPIDLFEEGSVVNVFTSLVGNVFGFKAVRALRLEDVRFPIAYVMTCNGPPHGIQVERDIMNKYGRPMLGCTIKPKLGLSAKNYGRAVYECLRGGLDFTKDDENVNSQPFMRWRQRFDFVMDAIDKAERETGERKGHYLNVTAPTPEEMYKRAEYAKEIGAPIIMHDYITGGFCANTGLAQWCRDNGVLLHIHRAMHAVLDRNPHHGIHFRVLTKILRLSGGDHLHTGTVVGKLEGDRASTLGWIDLLRESYIKEDRSRGLFFDQDWGSMPGAFAVASGGIHVWHMPALVTIFGDDSVLQFGGGTLGHPWGNAAGACANRVALEACVEARNQGVAIEKEGKDVLTKAAASSPELKIAMETWKEIKFEFDTVDKLDIAHK</sequence>
<dbReference type="EC" id="4.1.1.39" evidence="1 5"/>
<dbReference type="EMBL" id="M26396">
    <property type="protein sequence ID" value="AAA23328.1"/>
    <property type="molecule type" value="Genomic_DNA"/>
</dbReference>
<dbReference type="EMBL" id="CP001896">
    <property type="protein sequence ID" value="ADC62300.1"/>
    <property type="molecule type" value="Genomic_DNA"/>
</dbReference>
<dbReference type="PIR" id="A32303">
    <property type="entry name" value="RKKRL1"/>
</dbReference>
<dbReference type="RefSeq" id="WP_012970574.1">
    <property type="nucleotide sequence ID" value="NC_013851.1"/>
</dbReference>
<dbReference type="SMR" id="P22849"/>
<dbReference type="STRING" id="572477.Alvin_1365"/>
<dbReference type="KEGG" id="alv:Alvin_1365"/>
<dbReference type="eggNOG" id="COG1850">
    <property type="taxonomic scope" value="Bacteria"/>
</dbReference>
<dbReference type="HOGENOM" id="CLU_031450_2_0_6"/>
<dbReference type="OrthoDB" id="9770811at2"/>
<dbReference type="Proteomes" id="UP000001441">
    <property type="component" value="Chromosome"/>
</dbReference>
<dbReference type="GO" id="GO:0000287">
    <property type="term" value="F:magnesium ion binding"/>
    <property type="evidence" value="ECO:0007669"/>
    <property type="project" value="UniProtKB-UniRule"/>
</dbReference>
<dbReference type="GO" id="GO:0004497">
    <property type="term" value="F:monooxygenase activity"/>
    <property type="evidence" value="ECO:0007669"/>
    <property type="project" value="UniProtKB-KW"/>
</dbReference>
<dbReference type="GO" id="GO:0016984">
    <property type="term" value="F:ribulose-bisphosphate carboxylase activity"/>
    <property type="evidence" value="ECO:0007669"/>
    <property type="project" value="UniProtKB-UniRule"/>
</dbReference>
<dbReference type="GO" id="GO:0019253">
    <property type="term" value="P:reductive pentose-phosphate cycle"/>
    <property type="evidence" value="ECO:0007669"/>
    <property type="project" value="UniProtKB-UniRule"/>
</dbReference>
<dbReference type="Gene3D" id="3.20.20.110">
    <property type="entry name" value="Ribulose bisphosphate carboxylase, large subunit, C-terminal domain"/>
    <property type="match status" value="1"/>
</dbReference>
<dbReference type="Gene3D" id="3.30.70.150">
    <property type="entry name" value="RuBisCO large subunit, N-terminal domain"/>
    <property type="match status" value="1"/>
</dbReference>
<dbReference type="HAMAP" id="MF_01338">
    <property type="entry name" value="RuBisCO_L_type1"/>
    <property type="match status" value="1"/>
</dbReference>
<dbReference type="InterPro" id="IPR033966">
    <property type="entry name" value="RuBisCO"/>
</dbReference>
<dbReference type="InterPro" id="IPR020878">
    <property type="entry name" value="RuBisCo_large_chain_AS"/>
</dbReference>
<dbReference type="InterPro" id="IPR000685">
    <property type="entry name" value="RuBisCO_lsu_C"/>
</dbReference>
<dbReference type="InterPro" id="IPR036376">
    <property type="entry name" value="RuBisCO_lsu_C_sf"/>
</dbReference>
<dbReference type="InterPro" id="IPR017443">
    <property type="entry name" value="RuBisCO_lsu_fd_N"/>
</dbReference>
<dbReference type="InterPro" id="IPR036422">
    <property type="entry name" value="RuBisCO_lsu_N_sf"/>
</dbReference>
<dbReference type="InterPro" id="IPR020888">
    <property type="entry name" value="RuBisCO_lsuI"/>
</dbReference>
<dbReference type="NCBIfam" id="NF003252">
    <property type="entry name" value="PRK04208.1"/>
    <property type="match status" value="1"/>
</dbReference>
<dbReference type="PANTHER" id="PTHR42704">
    <property type="entry name" value="RIBULOSE BISPHOSPHATE CARBOXYLASE"/>
    <property type="match status" value="1"/>
</dbReference>
<dbReference type="PANTHER" id="PTHR42704:SF17">
    <property type="entry name" value="RIBULOSE BISPHOSPHATE CARBOXYLASE LARGE CHAIN"/>
    <property type="match status" value="1"/>
</dbReference>
<dbReference type="Pfam" id="PF00016">
    <property type="entry name" value="RuBisCO_large"/>
    <property type="match status" value="1"/>
</dbReference>
<dbReference type="Pfam" id="PF02788">
    <property type="entry name" value="RuBisCO_large_N"/>
    <property type="match status" value="1"/>
</dbReference>
<dbReference type="SFLD" id="SFLDG01052">
    <property type="entry name" value="RuBisCO"/>
    <property type="match status" value="1"/>
</dbReference>
<dbReference type="SFLD" id="SFLDS00014">
    <property type="entry name" value="RuBisCO"/>
    <property type="match status" value="1"/>
</dbReference>
<dbReference type="SFLD" id="SFLDG00301">
    <property type="entry name" value="RuBisCO-like_proteins"/>
    <property type="match status" value="1"/>
</dbReference>
<dbReference type="SUPFAM" id="SSF51649">
    <property type="entry name" value="RuBisCo, C-terminal domain"/>
    <property type="match status" value="1"/>
</dbReference>
<dbReference type="SUPFAM" id="SSF54966">
    <property type="entry name" value="RuBisCO, large subunit, small (N-terminal) domain"/>
    <property type="match status" value="1"/>
</dbReference>
<dbReference type="PROSITE" id="PS00157">
    <property type="entry name" value="RUBISCO_LARGE"/>
    <property type="match status" value="1"/>
</dbReference>
<accession>P22849</accession>
<accession>D3RSZ1</accession>
<organism>
    <name type="scientific">Allochromatium vinosum (strain ATCC 17899 / DSM 180 / NBRC 103801 / NCIMB 10441 / D)</name>
    <name type="common">Chromatium vinosum</name>
    <dbReference type="NCBI Taxonomy" id="572477"/>
    <lineage>
        <taxon>Bacteria</taxon>
        <taxon>Pseudomonadati</taxon>
        <taxon>Pseudomonadota</taxon>
        <taxon>Gammaproteobacteria</taxon>
        <taxon>Chromatiales</taxon>
        <taxon>Chromatiaceae</taxon>
        <taxon>Allochromatium</taxon>
    </lineage>
</organism>
<reference key="1">
    <citation type="journal article" date="1989" name="J. Bacteriol.">
        <title>Expressed genes for plant-type ribulose 1,5-bisphosphate carboxylase/oxygenase in the photosynthetic bacterium Chromatium vinosum, which possesses two complete sets of the genes.</title>
        <authorList>
            <person name="Viale A.M."/>
            <person name="Kobayashi H."/>
            <person name="Akazawa T."/>
        </authorList>
    </citation>
    <scope>NUCLEOTIDE SEQUENCE [GENOMIC DNA]</scope>
    <scope>PROTEIN SEQUENCE OF 3-9</scope>
    <scope>INDUCTION</scope>
</reference>
<reference key="2">
    <citation type="journal article" date="2011" name="Stand. Genomic Sci.">
        <title>Complete genome sequence of Allochromatium vinosum DSM 180(T).</title>
        <authorList>
            <person name="Weissgerber T."/>
            <person name="Zigann R."/>
            <person name="Bruce D."/>
            <person name="Chang Y.J."/>
            <person name="Detter J.C."/>
            <person name="Han C."/>
            <person name="Hauser L."/>
            <person name="Jeffries C.D."/>
            <person name="Land M."/>
            <person name="Munk A.C."/>
            <person name="Tapia R."/>
            <person name="Dahl C."/>
        </authorList>
    </citation>
    <scope>NUCLEOTIDE SEQUENCE [LARGE SCALE GENOMIC DNA]</scope>
    <source>
        <strain>ATCC 17899 / DSM 180 / NBRC 103801 / NCIMB 10441 / D</strain>
    </source>
</reference>
<reference key="3">
    <citation type="journal article" date="1990" name="J. Biol. Chem.">
        <title>Distinct properties of Escherichia coli products of plant-type ribulose-1,5-bisphosphate carboxylase/oxygenase directed by two sets of genes from the photosynthetic bacterium Chromatium vinosum.</title>
        <authorList>
            <person name="Viale A.M."/>
            <person name="Kobayashi H."/>
            <person name="Akazawa T."/>
        </authorList>
    </citation>
    <scope>PROTEIN SEQUENCE OF 2-25</scope>
    <scope>SUBUNIT</scope>
</reference>
<reference key="4">
    <citation type="journal article" date="1987" name="Arch. Biochem. Biophys.">
        <title>The nature of L8 and L8S8 forms of ribulose bisphosphate carboxylase/oxygenase from Chromatium vinosum.</title>
        <authorList>
            <person name="Torres-Ruiz J."/>
            <person name="McFadden B.A."/>
        </authorList>
    </citation>
    <scope>PROTEIN SEQUENCE OF 2-21</scope>
    <scope>FUNCTION</scope>
    <scope>CATALYTIC ACTIVITY</scope>
    <scope>BIOPHYSICOCHEMICAL PROPERTIES</scope>
    <scope>SUBUNIT</scope>
    <scope>INDUCTION</scope>
    <source>
        <strain>Strain D</strain>
    </source>
</reference>
<reference key="5">
    <citation type="journal article" date="1991" name="Gene">
        <title>Sequence and expression of genes encoding the large and small subunits of ribulose 1,5-bisphosphate carboxylase/oxygenase from Chromatium vinosum.</title>
        <authorList>
            <person name="Kobayashi H."/>
            <person name="Viale A.M."/>
            <person name="Takabe T."/>
            <person name="Akazawa T."/>
            <person name="Wada K."/>
            <person name="Shinozaki K."/>
            <person name="Kobayashi K."/>
            <person name="Sugiura M."/>
        </authorList>
    </citation>
    <scope>PROTEIN SEQUENCE OF 2-37</scope>
</reference>
<comment type="function">
    <text>RuBisCO catalyzes two reactions: the carboxylation of D-ribulose 1,5-bisphosphate, the primary event in carbon dioxide fixation, as well as the oxidative fragmentation of the pentose substrate. Both reactions occur simultaneously and in competition at the same active site.</text>
</comment>
<comment type="catalytic activity">
    <reaction evidence="1 5">
        <text>2 (2R)-3-phosphoglycerate + 2 H(+) = D-ribulose 1,5-bisphosphate + CO2 + H2O</text>
        <dbReference type="Rhea" id="RHEA:23124"/>
        <dbReference type="ChEBI" id="CHEBI:15377"/>
        <dbReference type="ChEBI" id="CHEBI:15378"/>
        <dbReference type="ChEBI" id="CHEBI:16526"/>
        <dbReference type="ChEBI" id="CHEBI:57870"/>
        <dbReference type="ChEBI" id="CHEBI:58272"/>
        <dbReference type="EC" id="4.1.1.39"/>
    </reaction>
</comment>
<comment type="catalytic activity">
    <reaction evidence="1">
        <text>D-ribulose 1,5-bisphosphate + O2 = 2-phosphoglycolate + (2R)-3-phosphoglycerate + 2 H(+)</text>
        <dbReference type="Rhea" id="RHEA:36631"/>
        <dbReference type="ChEBI" id="CHEBI:15378"/>
        <dbReference type="ChEBI" id="CHEBI:15379"/>
        <dbReference type="ChEBI" id="CHEBI:57870"/>
        <dbReference type="ChEBI" id="CHEBI:58033"/>
        <dbReference type="ChEBI" id="CHEBI:58272"/>
    </reaction>
</comment>
<comment type="cofactor">
    <cofactor evidence="1">
        <name>Mg(2+)</name>
        <dbReference type="ChEBI" id="CHEBI:18420"/>
    </cofactor>
    <text evidence="1">Binds 1 Mg(2+) ion per subunit.</text>
</comment>
<comment type="biophysicochemical properties">
    <kinetics>
        <KM evidence="5">32.8 uM for CO2 purified from A.vinosum in vivo</KM>
        <KM evidence="5">32.5 uM for CO2, enzyme expressed in E.coli</KM>
        <KM evidence="5">14.2 uM for D-ribulose 1,5-bisphosphate purified from A.vinosum in vivo</KM>
        <KM evidence="5">14 uM for D-ribulose 1,5-bisphosphate, enzyme expressed in E.coli</KM>
        <Vmax evidence="5">6.2 umol/min/mg enzyme purified from A.vinosum in vivo</Vmax>
        <Vmax evidence="5">6.4 umol/min/mg enzyme expressed in E.coli</Vmax>
    </kinetics>
</comment>
<comment type="subunit">
    <text evidence="1 3 7">Heterohexadecamer of 8 large chains and 8 small chains.</text>
</comment>
<comment type="induction">
    <text evidence="4 5">Expressed when grown photoautotrophically (at protein level).</text>
</comment>
<comment type="miscellaneous">
    <text evidence="1">The basic functional RuBisCO is composed of a large chain homodimer in a 'head-to-tail' conformation. In form I RuBisCO this homodimer is arranged in a barrel-like tetramer with the small subunits forming a tetrameric 'cap' on each end of the 'barrel'.</text>
</comment>
<comment type="similarity">
    <text evidence="1">Belongs to the RuBisCO large chain family. Type I subfamily.</text>
</comment>
<comment type="caution">
    <text evidence="3 4 5">In C.vinosum two similar set of genes code for RuBisCO large and small chains: the RbcL-RbcS and the RbcA-RbcB pair (this entry). Under standard photoautotrophic culture conditions only the latter pair seems active, the former probably being cryptic.</text>
</comment>
<gene>
    <name evidence="1" type="primary">cbbL1</name>
    <name evidence="6" type="synonym">rbcA</name>
    <name type="ordered locus">Alvin_1365</name>
</gene>
<protein>
    <recommendedName>
        <fullName evidence="1">Ribulose bisphosphate carboxylase large chain 1</fullName>
        <shortName evidence="1">RuBisCO large subunit 1</shortName>
        <ecNumber evidence="1 5">4.1.1.39</ecNumber>
    </recommendedName>
</protein>
<keyword id="KW-0113">Calvin cycle</keyword>
<keyword id="KW-0120">Carbon dioxide fixation</keyword>
<keyword id="KW-0903">Direct protein sequencing</keyword>
<keyword id="KW-0456">Lyase</keyword>
<keyword id="KW-0460">Magnesium</keyword>
<keyword id="KW-0479">Metal-binding</keyword>
<keyword id="KW-0503">Monooxygenase</keyword>
<keyword id="KW-0560">Oxidoreductase</keyword>
<keyword id="KW-0602">Photosynthesis</keyword>
<keyword id="KW-1185">Reference proteome</keyword>
<evidence type="ECO:0000255" key="1">
    <source>
        <dbReference type="HAMAP-Rule" id="MF_01338"/>
    </source>
</evidence>
<evidence type="ECO:0000269" key="2">
    <source>
    </source>
</evidence>
<evidence type="ECO:0000269" key="3">
    <source>
    </source>
</evidence>
<evidence type="ECO:0000269" key="4">
    <source>
    </source>
</evidence>
<evidence type="ECO:0000269" key="5">
    <source>
    </source>
</evidence>
<evidence type="ECO:0000303" key="6">
    <source>
    </source>
</evidence>
<evidence type="ECO:0000305" key="7">
    <source>
    </source>
</evidence>
<proteinExistence type="evidence at protein level"/>
<name>RBL1A_ALLVD</name>